<feature type="chain" id="PRO_1000139792" description="Glucosamine-6-phosphate deaminase">
    <location>
        <begin position="1"/>
        <end position="264"/>
    </location>
</feature>
<feature type="active site" description="Proton acceptor; for enolization step" evidence="1">
    <location>
        <position position="67"/>
    </location>
</feature>
<feature type="active site" description="For ring-opening step" evidence="1">
    <location>
        <position position="136"/>
    </location>
</feature>
<feature type="active site" description="Proton acceptor; for ring-opening step" evidence="1">
    <location>
        <position position="138"/>
    </location>
</feature>
<feature type="active site" description="For ring-opening step" evidence="1">
    <location>
        <position position="143"/>
    </location>
</feature>
<reference key="1">
    <citation type="submission" date="2008-02" db="EMBL/GenBank/DDBJ databases">
        <title>Complete sequence of Shewanella woodyi ATCC 51908.</title>
        <authorList>
            <consortium name="US DOE Joint Genome Institute"/>
            <person name="Copeland A."/>
            <person name="Lucas S."/>
            <person name="Lapidus A."/>
            <person name="Glavina del Rio T."/>
            <person name="Dalin E."/>
            <person name="Tice H."/>
            <person name="Bruce D."/>
            <person name="Goodwin L."/>
            <person name="Pitluck S."/>
            <person name="Sims D."/>
            <person name="Brettin T."/>
            <person name="Detter J.C."/>
            <person name="Han C."/>
            <person name="Kuske C.R."/>
            <person name="Schmutz J."/>
            <person name="Larimer F."/>
            <person name="Land M."/>
            <person name="Hauser L."/>
            <person name="Kyrpides N."/>
            <person name="Lykidis A."/>
            <person name="Zhao J.-S."/>
            <person name="Richardson P."/>
        </authorList>
    </citation>
    <scope>NUCLEOTIDE SEQUENCE [LARGE SCALE GENOMIC DNA]</scope>
    <source>
        <strain>ATCC 51908 / MS32</strain>
    </source>
</reference>
<evidence type="ECO:0000255" key="1">
    <source>
        <dbReference type="HAMAP-Rule" id="MF_01241"/>
    </source>
</evidence>
<proteinExistence type="inferred from homology"/>
<dbReference type="EC" id="3.5.99.6" evidence="1"/>
<dbReference type="EMBL" id="CP000961">
    <property type="protein sequence ID" value="ACA85236.1"/>
    <property type="molecule type" value="Genomic_DNA"/>
</dbReference>
<dbReference type="RefSeq" id="WP_012323583.1">
    <property type="nucleotide sequence ID" value="NC_010506.1"/>
</dbReference>
<dbReference type="SMR" id="B1KFS0"/>
<dbReference type="STRING" id="392500.Swoo_0943"/>
<dbReference type="KEGG" id="swd:Swoo_0943"/>
<dbReference type="eggNOG" id="COG0363">
    <property type="taxonomic scope" value="Bacteria"/>
</dbReference>
<dbReference type="HOGENOM" id="CLU_049611_0_1_6"/>
<dbReference type="UniPathway" id="UPA00629">
    <property type="reaction ID" value="UER00684"/>
</dbReference>
<dbReference type="Proteomes" id="UP000002168">
    <property type="component" value="Chromosome"/>
</dbReference>
<dbReference type="GO" id="GO:0005737">
    <property type="term" value="C:cytoplasm"/>
    <property type="evidence" value="ECO:0007669"/>
    <property type="project" value="TreeGrafter"/>
</dbReference>
<dbReference type="GO" id="GO:0004342">
    <property type="term" value="F:glucosamine-6-phosphate deaminase activity"/>
    <property type="evidence" value="ECO:0007669"/>
    <property type="project" value="UniProtKB-UniRule"/>
</dbReference>
<dbReference type="GO" id="GO:0042802">
    <property type="term" value="F:identical protein binding"/>
    <property type="evidence" value="ECO:0007669"/>
    <property type="project" value="TreeGrafter"/>
</dbReference>
<dbReference type="GO" id="GO:0005975">
    <property type="term" value="P:carbohydrate metabolic process"/>
    <property type="evidence" value="ECO:0007669"/>
    <property type="project" value="InterPro"/>
</dbReference>
<dbReference type="GO" id="GO:0006043">
    <property type="term" value="P:glucosamine catabolic process"/>
    <property type="evidence" value="ECO:0007669"/>
    <property type="project" value="TreeGrafter"/>
</dbReference>
<dbReference type="GO" id="GO:0006046">
    <property type="term" value="P:N-acetylglucosamine catabolic process"/>
    <property type="evidence" value="ECO:0007669"/>
    <property type="project" value="TreeGrafter"/>
</dbReference>
<dbReference type="GO" id="GO:0019262">
    <property type="term" value="P:N-acetylneuraminate catabolic process"/>
    <property type="evidence" value="ECO:0007669"/>
    <property type="project" value="UniProtKB-UniRule"/>
</dbReference>
<dbReference type="CDD" id="cd01399">
    <property type="entry name" value="GlcN6P_deaminase"/>
    <property type="match status" value="1"/>
</dbReference>
<dbReference type="FunFam" id="3.40.50.1360:FF:000003">
    <property type="entry name" value="Glucosamine-6-phosphate deaminase"/>
    <property type="match status" value="1"/>
</dbReference>
<dbReference type="Gene3D" id="3.40.50.1360">
    <property type="match status" value="1"/>
</dbReference>
<dbReference type="HAMAP" id="MF_01241">
    <property type="entry name" value="GlcN6P_deamin"/>
    <property type="match status" value="1"/>
</dbReference>
<dbReference type="InterPro" id="IPR006148">
    <property type="entry name" value="Glc/Gal-6P_isomerase"/>
</dbReference>
<dbReference type="InterPro" id="IPR004547">
    <property type="entry name" value="Glucosamine6P_isomerase"/>
</dbReference>
<dbReference type="InterPro" id="IPR018321">
    <property type="entry name" value="Glucosamine6P_isomerase_CS"/>
</dbReference>
<dbReference type="InterPro" id="IPR037171">
    <property type="entry name" value="NagB/RpiA_transferase-like"/>
</dbReference>
<dbReference type="NCBIfam" id="TIGR00502">
    <property type="entry name" value="nagB"/>
    <property type="match status" value="1"/>
</dbReference>
<dbReference type="NCBIfam" id="NF001684">
    <property type="entry name" value="PRK00443.1-4"/>
    <property type="match status" value="1"/>
</dbReference>
<dbReference type="PANTHER" id="PTHR11280">
    <property type="entry name" value="GLUCOSAMINE-6-PHOSPHATE ISOMERASE"/>
    <property type="match status" value="1"/>
</dbReference>
<dbReference type="PANTHER" id="PTHR11280:SF5">
    <property type="entry name" value="GLUCOSAMINE-6-PHOSPHATE ISOMERASE"/>
    <property type="match status" value="1"/>
</dbReference>
<dbReference type="Pfam" id="PF01182">
    <property type="entry name" value="Glucosamine_iso"/>
    <property type="match status" value="1"/>
</dbReference>
<dbReference type="SUPFAM" id="SSF100950">
    <property type="entry name" value="NagB/RpiA/CoA transferase-like"/>
    <property type="match status" value="1"/>
</dbReference>
<dbReference type="PROSITE" id="PS01161">
    <property type="entry name" value="GLC_GALNAC_ISOMERASE"/>
    <property type="match status" value="1"/>
</dbReference>
<keyword id="KW-0119">Carbohydrate metabolism</keyword>
<keyword id="KW-0378">Hydrolase</keyword>
<keyword id="KW-1185">Reference proteome</keyword>
<accession>B1KFS0</accession>
<comment type="function">
    <text evidence="1">Catalyzes the reversible isomerization-deamination of glucosamine 6-phosphate (GlcN6P) to form fructose 6-phosphate (Fru6P) and ammonium ion.</text>
</comment>
<comment type="catalytic activity">
    <reaction evidence="1">
        <text>alpha-D-glucosamine 6-phosphate + H2O = beta-D-fructose 6-phosphate + NH4(+)</text>
        <dbReference type="Rhea" id="RHEA:12172"/>
        <dbReference type="ChEBI" id="CHEBI:15377"/>
        <dbReference type="ChEBI" id="CHEBI:28938"/>
        <dbReference type="ChEBI" id="CHEBI:57634"/>
        <dbReference type="ChEBI" id="CHEBI:75989"/>
        <dbReference type="EC" id="3.5.99.6"/>
    </reaction>
</comment>
<comment type="pathway">
    <text evidence="1">Amino-sugar metabolism; N-acetylneuraminate degradation; D-fructose 6-phosphate from N-acetylneuraminate: step 5/5.</text>
</comment>
<comment type="subunit">
    <text evidence="1">Homohexamer.</text>
</comment>
<comment type="similarity">
    <text evidence="1">Belongs to the glucosamine/galactosamine-6-phosphate isomerase family. NagB subfamily.</text>
</comment>
<organism>
    <name type="scientific">Shewanella woodyi (strain ATCC 51908 / MS32)</name>
    <dbReference type="NCBI Taxonomy" id="392500"/>
    <lineage>
        <taxon>Bacteria</taxon>
        <taxon>Pseudomonadati</taxon>
        <taxon>Pseudomonadota</taxon>
        <taxon>Gammaproteobacteria</taxon>
        <taxon>Alteromonadales</taxon>
        <taxon>Shewanellaceae</taxon>
        <taxon>Shewanella</taxon>
    </lineage>
</organism>
<protein>
    <recommendedName>
        <fullName evidence="1">Glucosamine-6-phosphate deaminase</fullName>
        <ecNumber evidence="1">3.5.99.6</ecNumber>
    </recommendedName>
    <alternativeName>
        <fullName evidence="1">GlcN6P deaminase</fullName>
        <shortName evidence="1">GNPDA</shortName>
    </alternativeName>
    <alternativeName>
        <fullName evidence="1">Glucosamine-6-phosphate isomerase</fullName>
    </alternativeName>
</protein>
<name>NAGB_SHEWM</name>
<gene>
    <name evidence="1" type="primary">nagB</name>
    <name type="ordered locus">Swoo_0943</name>
</gene>
<sequence>MQIVILKNSAEVAEYGANIFKKQLQSKPDSVLGLATGSTPVSLYQGLIEANKLGDISFKEVTSFNLDEYLGLAGTHPQSYRYFMNEQLFDHIDIDKANTHVPPGDAENPIQACDGYEEQIQAAGGIDIQLLGIGRNGHIGFNEPSSGLMSRTRVKTLTKATIEDNARFFKEDEYQPHLSITMGIGTILDAKKVVLLATGENKADAILATVEGALTASCPASALQLHKNAVLVIDEAAASKLSDRDFYKHIEAENQKLLARLAKS</sequence>